<comment type="function">
    <text evidence="1">Protein S19 forms a complex with S13 that binds strongly to the 16S ribosomal RNA.</text>
</comment>
<comment type="subcellular location">
    <subcellularLocation>
        <location>Plastid</location>
        <location>Chloroplast</location>
    </subcellularLocation>
</comment>
<comment type="similarity">
    <text evidence="1">Belongs to the universal ribosomal protein uS19 family.</text>
</comment>
<accession>A1E9H0</accession>
<sequence length="93" mass="10753">MTRKKTNPFVAHHLLAKIEKVNMKEEKETIVTWSRASSILPTMVGHTIAIHNGKEHIPIYITNPMVGRKLGEFVPTRHFTSYENARKDTKSRR</sequence>
<evidence type="ECO:0000255" key="1">
    <source>
        <dbReference type="HAMAP-Rule" id="MF_00531"/>
    </source>
</evidence>
<evidence type="ECO:0000305" key="2"/>
<protein>
    <recommendedName>
        <fullName evidence="1">Small ribosomal subunit protein uS19c</fullName>
    </recommendedName>
    <alternativeName>
        <fullName evidence="2">30S ribosomal protein S19, chloroplastic</fullName>
    </alternativeName>
</protein>
<proteinExistence type="inferred from homology"/>
<reference key="1">
    <citation type="journal article" date="2007" name="Theor. Appl. Genet.">
        <title>Complete chloroplast genome sequences of Hordeum vulgare, Sorghum bicolor and Agrostis stolonifera, and comparative analyses with other grass genomes.</title>
        <authorList>
            <person name="Saski C."/>
            <person name="Lee S.-B."/>
            <person name="Fjellheim S."/>
            <person name="Guda C."/>
            <person name="Jansen R.K."/>
            <person name="Luo H."/>
            <person name="Tomkins J."/>
            <person name="Rognli O.A."/>
            <person name="Daniell H."/>
            <person name="Clarke J.L."/>
        </authorList>
    </citation>
    <scope>NUCLEOTIDE SEQUENCE [LARGE SCALE GENOMIC DNA]</scope>
    <source>
        <strain>cv. Morex</strain>
    </source>
</reference>
<gene>
    <name evidence="1" type="primary">rps19</name>
</gene>
<dbReference type="EMBL" id="EF115541">
    <property type="protein sequence ID" value="ABK79392.1"/>
    <property type="molecule type" value="Genomic_DNA"/>
</dbReference>
<dbReference type="EMBL" id="EF115541">
    <property type="protein sequence ID" value="ABK79452.1"/>
    <property type="molecule type" value="Genomic_DNA"/>
</dbReference>
<dbReference type="RefSeq" id="YP_874632.1">
    <property type="nucleotide sequence ID" value="NC_008590.1"/>
</dbReference>
<dbReference type="RefSeq" id="YP_874693.1">
    <property type="nucleotide sequence ID" value="NC_008590.1"/>
</dbReference>
<dbReference type="SMR" id="A1E9H0"/>
<dbReference type="GeneID" id="4525095"/>
<dbReference type="GeneID" id="4525115"/>
<dbReference type="GO" id="GO:0009507">
    <property type="term" value="C:chloroplast"/>
    <property type="evidence" value="ECO:0007669"/>
    <property type="project" value="UniProtKB-SubCell"/>
</dbReference>
<dbReference type="GO" id="GO:0005763">
    <property type="term" value="C:mitochondrial small ribosomal subunit"/>
    <property type="evidence" value="ECO:0007669"/>
    <property type="project" value="TreeGrafter"/>
</dbReference>
<dbReference type="GO" id="GO:0019843">
    <property type="term" value="F:rRNA binding"/>
    <property type="evidence" value="ECO:0007669"/>
    <property type="project" value="UniProtKB-UniRule"/>
</dbReference>
<dbReference type="GO" id="GO:0003735">
    <property type="term" value="F:structural constituent of ribosome"/>
    <property type="evidence" value="ECO:0007669"/>
    <property type="project" value="InterPro"/>
</dbReference>
<dbReference type="GO" id="GO:0000028">
    <property type="term" value="P:ribosomal small subunit assembly"/>
    <property type="evidence" value="ECO:0007669"/>
    <property type="project" value="TreeGrafter"/>
</dbReference>
<dbReference type="GO" id="GO:0006412">
    <property type="term" value="P:translation"/>
    <property type="evidence" value="ECO:0007669"/>
    <property type="project" value="UniProtKB-UniRule"/>
</dbReference>
<dbReference type="FunFam" id="3.30.860.10:FF:000001">
    <property type="entry name" value="30S ribosomal protein S19"/>
    <property type="match status" value="1"/>
</dbReference>
<dbReference type="Gene3D" id="3.30.860.10">
    <property type="entry name" value="30s Ribosomal Protein S19, Chain A"/>
    <property type="match status" value="1"/>
</dbReference>
<dbReference type="HAMAP" id="MF_00531">
    <property type="entry name" value="Ribosomal_uS19"/>
    <property type="match status" value="1"/>
</dbReference>
<dbReference type="InterPro" id="IPR002222">
    <property type="entry name" value="Ribosomal_uS19"/>
</dbReference>
<dbReference type="InterPro" id="IPR005732">
    <property type="entry name" value="Ribosomal_uS19_bac-type"/>
</dbReference>
<dbReference type="InterPro" id="IPR020934">
    <property type="entry name" value="Ribosomal_uS19_CS"/>
</dbReference>
<dbReference type="InterPro" id="IPR023575">
    <property type="entry name" value="Ribosomal_uS19_SF"/>
</dbReference>
<dbReference type="NCBIfam" id="TIGR01050">
    <property type="entry name" value="rpsS_bact"/>
    <property type="match status" value="1"/>
</dbReference>
<dbReference type="PANTHER" id="PTHR11880">
    <property type="entry name" value="RIBOSOMAL PROTEIN S19P FAMILY MEMBER"/>
    <property type="match status" value="1"/>
</dbReference>
<dbReference type="PANTHER" id="PTHR11880:SF8">
    <property type="entry name" value="SMALL RIBOSOMAL SUBUNIT PROTEIN US19M"/>
    <property type="match status" value="1"/>
</dbReference>
<dbReference type="Pfam" id="PF00203">
    <property type="entry name" value="Ribosomal_S19"/>
    <property type="match status" value="1"/>
</dbReference>
<dbReference type="PIRSF" id="PIRSF002144">
    <property type="entry name" value="Ribosomal_S19"/>
    <property type="match status" value="1"/>
</dbReference>
<dbReference type="PRINTS" id="PR00975">
    <property type="entry name" value="RIBOSOMALS19"/>
</dbReference>
<dbReference type="SUPFAM" id="SSF54570">
    <property type="entry name" value="Ribosomal protein S19"/>
    <property type="match status" value="1"/>
</dbReference>
<dbReference type="PROSITE" id="PS00323">
    <property type="entry name" value="RIBOSOMAL_S19"/>
    <property type="match status" value="1"/>
</dbReference>
<name>RR19_HORVU</name>
<organism>
    <name type="scientific">Hordeum vulgare</name>
    <name type="common">Barley</name>
    <dbReference type="NCBI Taxonomy" id="4513"/>
    <lineage>
        <taxon>Eukaryota</taxon>
        <taxon>Viridiplantae</taxon>
        <taxon>Streptophyta</taxon>
        <taxon>Embryophyta</taxon>
        <taxon>Tracheophyta</taxon>
        <taxon>Spermatophyta</taxon>
        <taxon>Magnoliopsida</taxon>
        <taxon>Liliopsida</taxon>
        <taxon>Poales</taxon>
        <taxon>Poaceae</taxon>
        <taxon>BOP clade</taxon>
        <taxon>Pooideae</taxon>
        <taxon>Triticodae</taxon>
        <taxon>Triticeae</taxon>
        <taxon>Hordeinae</taxon>
        <taxon>Hordeum</taxon>
    </lineage>
</organism>
<geneLocation type="chloroplast"/>
<keyword id="KW-0150">Chloroplast</keyword>
<keyword id="KW-0934">Plastid</keyword>
<keyword id="KW-0687">Ribonucleoprotein</keyword>
<keyword id="KW-0689">Ribosomal protein</keyword>
<keyword id="KW-0694">RNA-binding</keyword>
<keyword id="KW-0699">rRNA-binding</keyword>
<feature type="chain" id="PRO_0000354355" description="Small ribosomal subunit protein uS19c">
    <location>
        <begin position="1"/>
        <end position="93"/>
    </location>
</feature>